<name>SRD40_CAEEL</name>
<dbReference type="EMBL" id="Z68114">
    <property type="protein sequence ID" value="CAA92156.1"/>
    <property type="molecule type" value="Genomic_DNA"/>
</dbReference>
<dbReference type="PIR" id="T21040">
    <property type="entry name" value="T21040"/>
</dbReference>
<dbReference type="RefSeq" id="NP_510062.1">
    <property type="nucleotide sequence ID" value="NM_077661.2"/>
</dbReference>
<dbReference type="SMR" id="Q19509"/>
<dbReference type="FunCoup" id="Q19509">
    <property type="interactions" value="4"/>
</dbReference>
<dbReference type="PaxDb" id="6239-F17A2.12"/>
<dbReference type="EnsemblMetazoa" id="F17A2.12.1">
    <property type="protein sequence ID" value="F17A2.12.1"/>
    <property type="gene ID" value="WBGene00005118"/>
</dbReference>
<dbReference type="GeneID" id="184608"/>
<dbReference type="KEGG" id="cel:CELE_F17A2.12"/>
<dbReference type="UCSC" id="F17A2.12">
    <property type="organism name" value="c. elegans"/>
</dbReference>
<dbReference type="AGR" id="WB:WBGene00005118"/>
<dbReference type="CTD" id="184608"/>
<dbReference type="WormBase" id="F17A2.12">
    <property type="protein sequence ID" value="CE03221"/>
    <property type="gene ID" value="WBGene00005118"/>
    <property type="gene designation" value="srd-40"/>
</dbReference>
<dbReference type="eggNOG" id="ENOG502TGEP">
    <property type="taxonomic scope" value="Eukaryota"/>
</dbReference>
<dbReference type="GeneTree" id="ENSGT00970000195825"/>
<dbReference type="HOGENOM" id="CLU_057924_2_0_1"/>
<dbReference type="InParanoid" id="Q19509"/>
<dbReference type="OMA" id="QFRMIST"/>
<dbReference type="OrthoDB" id="5836250at2759"/>
<dbReference type="PhylomeDB" id="Q19509"/>
<dbReference type="PRO" id="PR:Q19509"/>
<dbReference type="Proteomes" id="UP000001940">
    <property type="component" value="Chromosome X"/>
</dbReference>
<dbReference type="GO" id="GO:0016020">
    <property type="term" value="C:membrane"/>
    <property type="evidence" value="ECO:0007669"/>
    <property type="project" value="UniProtKB-SubCell"/>
</dbReference>
<dbReference type="InterPro" id="IPR019421">
    <property type="entry name" value="7TM_GPCR_serpentine_rcpt_Srd"/>
</dbReference>
<dbReference type="InterPro" id="IPR050920">
    <property type="entry name" value="Nematode_rcpt-like_delta"/>
</dbReference>
<dbReference type="PANTHER" id="PTHR22945:SF47">
    <property type="entry name" value="SERPENTINE RECEPTOR CLASS DELTA-40"/>
    <property type="match status" value="1"/>
</dbReference>
<dbReference type="PANTHER" id="PTHR22945">
    <property type="entry name" value="SERPENTINE RECEPTOR, CLASS D DELTA"/>
    <property type="match status" value="1"/>
</dbReference>
<dbReference type="Pfam" id="PF10317">
    <property type="entry name" value="7TM_GPCR_Srd"/>
    <property type="match status" value="1"/>
</dbReference>
<dbReference type="SUPFAM" id="SSF81321">
    <property type="entry name" value="Family A G protein-coupled receptor-like"/>
    <property type="match status" value="1"/>
</dbReference>
<keyword id="KW-0472">Membrane</keyword>
<keyword id="KW-1185">Reference proteome</keyword>
<keyword id="KW-0812">Transmembrane</keyword>
<keyword id="KW-1133">Transmembrane helix</keyword>
<feature type="chain" id="PRO_0000104522" description="Serpentine receptor class delta-40">
    <location>
        <begin position="1"/>
        <end position="320"/>
    </location>
</feature>
<feature type="transmembrane region" description="Helical" evidence="1">
    <location>
        <begin position="12"/>
        <end position="32"/>
    </location>
</feature>
<feature type="transmembrane region" description="Helical" evidence="1">
    <location>
        <begin position="42"/>
        <end position="62"/>
    </location>
</feature>
<feature type="transmembrane region" description="Helical" evidence="1">
    <location>
        <begin position="95"/>
        <end position="115"/>
    </location>
</feature>
<feature type="transmembrane region" description="Helical" evidence="1">
    <location>
        <begin position="133"/>
        <end position="153"/>
    </location>
</feature>
<feature type="transmembrane region" description="Helical" evidence="1">
    <location>
        <begin position="189"/>
        <end position="209"/>
    </location>
</feature>
<feature type="transmembrane region" description="Helical" evidence="1">
    <location>
        <begin position="243"/>
        <end position="263"/>
    </location>
</feature>
<feature type="transmembrane region" description="Helical" evidence="1">
    <location>
        <begin position="273"/>
        <end position="293"/>
    </location>
</feature>
<protein>
    <recommendedName>
        <fullName>Serpentine receptor class delta-40</fullName>
        <shortName>Protein srd-40</shortName>
    </recommendedName>
</protein>
<evidence type="ECO:0000255" key="1"/>
<evidence type="ECO:0000305" key="2"/>
<comment type="subcellular location">
    <subcellularLocation>
        <location evidence="2">Membrane</location>
        <topology evidence="2">Multi-pass membrane protein</topology>
    </subcellularLocation>
</comment>
<comment type="similarity">
    <text evidence="2">Belongs to the nematode receptor-like protein srd family.</text>
</comment>
<proteinExistence type="inferred from homology"/>
<accession>Q19509</accession>
<sequence>MGADIYRDVLYIFYPIFFIFSTITQLMLIYLIFYHSPTHLKMLKVFLLNTSLFQIILVVVSCSSQFRMITTAIPIELRSYGLLRYLEAWLGYTMYQVLQTSAFMSGMSILITFVFKYELVRQIEFSKSRVTGIILLFHMPIIASMVMEVIMVINQSLPNEIREQYKFLNANAEEYSIVGALSLKTVPSLINFLLISGSVVASPFISFFFREKILRRINSQFYQHSKWKKSQIQVFVKGLTIQAFLPLIFYVPVFGLYFYCILTHTEILFQQYFMTVVPCLPAFFDPMLTLYFVTPYRRRLKIWMRIEKESKVLPVTSLVK</sequence>
<gene>
    <name type="primary">srd-40</name>
    <name type="ORF">F17A2.12</name>
</gene>
<reference key="1">
    <citation type="journal article" date="1998" name="Science">
        <title>Genome sequence of the nematode C. elegans: a platform for investigating biology.</title>
        <authorList>
            <consortium name="The C. elegans sequencing consortium"/>
        </authorList>
    </citation>
    <scope>NUCLEOTIDE SEQUENCE [LARGE SCALE GENOMIC DNA]</scope>
    <source>
        <strain>Bristol N2</strain>
    </source>
</reference>
<organism>
    <name type="scientific">Caenorhabditis elegans</name>
    <dbReference type="NCBI Taxonomy" id="6239"/>
    <lineage>
        <taxon>Eukaryota</taxon>
        <taxon>Metazoa</taxon>
        <taxon>Ecdysozoa</taxon>
        <taxon>Nematoda</taxon>
        <taxon>Chromadorea</taxon>
        <taxon>Rhabditida</taxon>
        <taxon>Rhabditina</taxon>
        <taxon>Rhabditomorpha</taxon>
        <taxon>Rhabditoidea</taxon>
        <taxon>Rhabditidae</taxon>
        <taxon>Peloderinae</taxon>
        <taxon>Caenorhabditis</taxon>
    </lineage>
</organism>